<gene>
    <name type="primary">OPG106</name>
    <name type="ORF">H1L</name>
</gene>
<organismHost>
    <name type="scientific">Homo sapiens</name>
    <name type="common">Human</name>
    <dbReference type="NCBI Taxonomy" id="9606"/>
</organismHost>
<comment type="function">
    <text evidence="1">Serine/tyrosine phosphatase which down-regulates cellular antiviral response by dephosphorylating activated host STAT1 and blocking interferon (IFN)-stimulated innate immune responses. Dephosphorylates the OPG144 protein.</text>
</comment>
<comment type="catalytic activity">
    <reaction evidence="1">
        <text>O-phospho-L-tyrosyl-[protein] + H2O = L-tyrosyl-[protein] + phosphate</text>
        <dbReference type="Rhea" id="RHEA:10684"/>
        <dbReference type="Rhea" id="RHEA-COMP:10136"/>
        <dbReference type="Rhea" id="RHEA-COMP:20101"/>
        <dbReference type="ChEBI" id="CHEBI:15377"/>
        <dbReference type="ChEBI" id="CHEBI:43474"/>
        <dbReference type="ChEBI" id="CHEBI:46858"/>
        <dbReference type="ChEBI" id="CHEBI:61978"/>
        <dbReference type="EC" id="3.1.3.48"/>
    </reaction>
</comment>
<comment type="catalytic activity">
    <reaction evidence="1">
        <text>O-phospho-L-seryl-[protein] + H2O = L-seryl-[protein] + phosphate</text>
        <dbReference type="Rhea" id="RHEA:20629"/>
        <dbReference type="Rhea" id="RHEA-COMP:9863"/>
        <dbReference type="Rhea" id="RHEA-COMP:11604"/>
        <dbReference type="ChEBI" id="CHEBI:15377"/>
        <dbReference type="ChEBI" id="CHEBI:29999"/>
        <dbReference type="ChEBI" id="CHEBI:43474"/>
        <dbReference type="ChEBI" id="CHEBI:83421"/>
    </reaction>
</comment>
<comment type="subunit">
    <text evidence="1">Homodimer.</text>
</comment>
<comment type="subcellular location">
    <subcellularLocation>
        <location evidence="1">Virion</location>
    </subcellularLocation>
    <subcellularLocation>
        <location evidence="1">Host cytoplasm</location>
    </subcellularLocation>
    <text evidence="1">Approximately 200 molecules of OPG106 are packaged within the virion and are essential for the viability of the virus.</text>
</comment>
<comment type="induction">
    <text>Expressed in the late phase of the viral replicative cycle.</text>
</comment>
<comment type="similarity">
    <text evidence="3">Belongs to the protein-tyrosine phosphatase family. Non-receptor class dual specificity subfamily.</text>
</comment>
<sequence>MDKKSLYKYLLLRSTGDMHKAKSPTIMTRVTNNVYLGNYKNAMDAPSSEVKFKYVLNLTMDKYTLPNSNINIIHIPLVDDTTTDISKYFDDVTAFLSKCDQRNEPVLVHCAAGVNRSGAMILAYLMSKNKESSPMLYFLYVYHSMRDLRGAFVENPSFKRQIIEKYVIDKN</sequence>
<protein>
    <recommendedName>
        <fullName>Dual specificity protein phosphatase OPG106</fullName>
        <ecNumber>3.1.3.-</ecNumber>
        <ecNumber>3.1.3.48</ecNumber>
    </recommendedName>
    <alternativeName>
        <fullName>Late protein H1</fullName>
    </alternativeName>
</protein>
<reference key="1">
    <citation type="journal article" date="1990" name="Virology">
        <title>The complete DNA sequence of vaccinia virus.</title>
        <authorList>
            <person name="Goebel S.J."/>
            <person name="Johnson G.P."/>
            <person name="Perkus M.E."/>
            <person name="Davis S.W."/>
            <person name="Winslow J.P."/>
            <person name="Paoletti E."/>
        </authorList>
    </citation>
    <scope>NUCLEOTIDE SEQUENCE [LARGE SCALE GENOMIC DNA]</scope>
</reference>
<reference key="2">
    <citation type="journal article" date="1990" name="Virology">
        <title>Appendix to 'The complete DNA sequence of vaccinia virus'.</title>
        <authorList>
            <person name="Goebel S.J."/>
            <person name="Johnson G.P."/>
            <person name="Perkus M.E."/>
            <person name="Davis S.W."/>
            <person name="Winslow J.P."/>
            <person name="Paoletti E."/>
        </authorList>
    </citation>
    <scope>NUCLEOTIDE SEQUENCE [LARGE SCALE GENOMIC DNA]</scope>
</reference>
<feature type="chain" id="PRO_0000094867" description="Dual specificity protein phosphatase OPG106">
    <location>
        <begin position="1"/>
        <end position="171"/>
    </location>
</feature>
<feature type="domain" description="Tyrosine-protein phosphatase" evidence="2">
    <location>
        <begin position="23"/>
        <end position="171"/>
    </location>
</feature>
<feature type="active site" description="Phosphocysteine intermediate" evidence="2">
    <location>
        <position position="110"/>
    </location>
</feature>
<dbReference type="EC" id="3.1.3.-"/>
<dbReference type="EC" id="3.1.3.48"/>
<dbReference type="EMBL" id="M35027">
    <property type="protein sequence ID" value="AAA48088.1"/>
    <property type="molecule type" value="Genomic_DNA"/>
</dbReference>
<dbReference type="PIR" id="A42514">
    <property type="entry name" value="A42514"/>
</dbReference>
<dbReference type="SMR" id="P20495"/>
<dbReference type="Proteomes" id="UP000008269">
    <property type="component" value="Segment"/>
</dbReference>
<dbReference type="GO" id="GO:0030430">
    <property type="term" value="C:host cell cytoplasm"/>
    <property type="evidence" value="ECO:0007669"/>
    <property type="project" value="UniProtKB-SubCell"/>
</dbReference>
<dbReference type="GO" id="GO:0044423">
    <property type="term" value="C:virion component"/>
    <property type="evidence" value="ECO:0007669"/>
    <property type="project" value="UniProtKB-KW"/>
</dbReference>
<dbReference type="GO" id="GO:0004722">
    <property type="term" value="F:protein serine/threonine phosphatase activity"/>
    <property type="evidence" value="ECO:0007669"/>
    <property type="project" value="RHEA"/>
</dbReference>
<dbReference type="GO" id="GO:0004725">
    <property type="term" value="F:protein tyrosine phosphatase activity"/>
    <property type="evidence" value="ECO:0007669"/>
    <property type="project" value="UniProtKB-EC"/>
</dbReference>
<dbReference type="GO" id="GO:0043409">
    <property type="term" value="P:negative regulation of MAPK cascade"/>
    <property type="evidence" value="ECO:0007669"/>
    <property type="project" value="TreeGrafter"/>
</dbReference>
<dbReference type="GO" id="GO:0052170">
    <property type="term" value="P:symbiont-mediated suppression of host innate immune response"/>
    <property type="evidence" value="ECO:0007669"/>
    <property type="project" value="UniProtKB-KW"/>
</dbReference>
<dbReference type="GO" id="GO:0039563">
    <property type="term" value="P:symbiont-mediated suppression of host JAK-STAT cascade via inhibition of STAT1 activity"/>
    <property type="evidence" value="ECO:0007669"/>
    <property type="project" value="UniProtKB-KW"/>
</dbReference>
<dbReference type="GO" id="GO:0039502">
    <property type="term" value="P:symbiont-mediated suppression of host type I interferon-mediated signaling pathway"/>
    <property type="evidence" value="ECO:0007669"/>
    <property type="project" value="UniProtKB-KW"/>
</dbReference>
<dbReference type="CDD" id="cd14498">
    <property type="entry name" value="DSP"/>
    <property type="match status" value="1"/>
</dbReference>
<dbReference type="Gene3D" id="3.90.190.10">
    <property type="entry name" value="Protein tyrosine phosphatase superfamily"/>
    <property type="match status" value="1"/>
</dbReference>
<dbReference type="InterPro" id="IPR000340">
    <property type="entry name" value="Dual-sp_phosphatase_cat-dom"/>
</dbReference>
<dbReference type="InterPro" id="IPR029021">
    <property type="entry name" value="Prot-tyrosine_phosphatase-like"/>
</dbReference>
<dbReference type="InterPro" id="IPR016130">
    <property type="entry name" value="Tyr_Pase_AS"/>
</dbReference>
<dbReference type="InterPro" id="IPR003595">
    <property type="entry name" value="Tyr_Pase_cat"/>
</dbReference>
<dbReference type="InterPro" id="IPR000387">
    <property type="entry name" value="Tyr_Pase_dom"/>
</dbReference>
<dbReference type="InterPro" id="IPR020422">
    <property type="entry name" value="TYR_PHOSPHATASE_DUAL_dom"/>
</dbReference>
<dbReference type="PANTHER" id="PTHR10159">
    <property type="entry name" value="DUAL SPECIFICITY PROTEIN PHOSPHATASE"/>
    <property type="match status" value="1"/>
</dbReference>
<dbReference type="PANTHER" id="PTHR10159:SF519">
    <property type="entry name" value="DUAL SPECIFICITY PROTEIN PHOSPHATASE MPK3"/>
    <property type="match status" value="1"/>
</dbReference>
<dbReference type="Pfam" id="PF00782">
    <property type="entry name" value="DSPc"/>
    <property type="match status" value="1"/>
</dbReference>
<dbReference type="SMART" id="SM00195">
    <property type="entry name" value="DSPc"/>
    <property type="match status" value="1"/>
</dbReference>
<dbReference type="SMART" id="SM00404">
    <property type="entry name" value="PTPc_motif"/>
    <property type="match status" value="1"/>
</dbReference>
<dbReference type="SUPFAM" id="SSF52799">
    <property type="entry name" value="(Phosphotyrosine protein) phosphatases II"/>
    <property type="match status" value="1"/>
</dbReference>
<dbReference type="PROSITE" id="PS00383">
    <property type="entry name" value="TYR_PHOSPHATASE_1"/>
    <property type="match status" value="1"/>
</dbReference>
<dbReference type="PROSITE" id="PS50056">
    <property type="entry name" value="TYR_PHOSPHATASE_2"/>
    <property type="match status" value="1"/>
</dbReference>
<dbReference type="PROSITE" id="PS50054">
    <property type="entry name" value="TYR_PHOSPHATASE_DUAL"/>
    <property type="match status" value="1"/>
</dbReference>
<keyword id="KW-1035">Host cytoplasm</keyword>
<keyword id="KW-0945">Host-virus interaction</keyword>
<keyword id="KW-0378">Hydrolase</keyword>
<keyword id="KW-1090">Inhibition of host innate immune response by virus</keyword>
<keyword id="KW-1114">Inhibition of host interferon signaling pathway by virus</keyword>
<keyword id="KW-1105">Inhibition of host STAT1 by virus</keyword>
<keyword id="KW-0922">Interferon antiviral system evasion</keyword>
<keyword id="KW-0426">Late protein</keyword>
<keyword id="KW-0904">Protein phosphatase</keyword>
<keyword id="KW-1185">Reference proteome</keyword>
<keyword id="KW-0899">Viral immunoevasion</keyword>
<keyword id="KW-0946">Virion</keyword>
<name>DUSP_VACCC</name>
<accession>P20495</accession>
<organism>
    <name type="scientific">Vaccinia virus (strain Copenhagen)</name>
    <name type="common">VACV</name>
    <dbReference type="NCBI Taxonomy" id="10249"/>
    <lineage>
        <taxon>Viruses</taxon>
        <taxon>Varidnaviria</taxon>
        <taxon>Bamfordvirae</taxon>
        <taxon>Nucleocytoviricota</taxon>
        <taxon>Pokkesviricetes</taxon>
        <taxon>Chitovirales</taxon>
        <taxon>Poxviridae</taxon>
        <taxon>Chordopoxvirinae</taxon>
        <taxon>Orthopoxvirus</taxon>
        <taxon>Vaccinia virus</taxon>
    </lineage>
</organism>
<evidence type="ECO:0000250" key="1">
    <source>
        <dbReference type="UniProtKB" id="P07239"/>
    </source>
</evidence>
<evidence type="ECO:0000255" key="2">
    <source>
        <dbReference type="PROSITE-ProRule" id="PRU00160"/>
    </source>
</evidence>
<evidence type="ECO:0000305" key="3"/>
<proteinExistence type="evidence at transcript level"/>